<name>UXAC_CORGL</name>
<keyword id="KW-0413">Isomerase</keyword>
<keyword id="KW-1185">Reference proteome</keyword>
<dbReference type="EC" id="5.3.1.12"/>
<dbReference type="EMBL" id="BA000036">
    <property type="protein sequence ID" value="BAB99877.1"/>
    <property type="molecule type" value="Genomic_DNA"/>
</dbReference>
<dbReference type="EMBL" id="BX927155">
    <property type="protein sequence ID" value="CAF21146.1"/>
    <property type="molecule type" value="Genomic_DNA"/>
</dbReference>
<dbReference type="RefSeq" id="NP_601685.2">
    <property type="nucleotide sequence ID" value="NC_003450.3"/>
</dbReference>
<dbReference type="RefSeq" id="WP_011015159.1">
    <property type="nucleotide sequence ID" value="NC_006958.1"/>
</dbReference>
<dbReference type="SMR" id="Q8NMT1"/>
<dbReference type="STRING" id="196627.cg2731"/>
<dbReference type="GeneID" id="1020431"/>
<dbReference type="KEGG" id="cgb:cg2731"/>
<dbReference type="KEGG" id="cgl:Cgl2484"/>
<dbReference type="PATRIC" id="fig|196627.13.peg.2417"/>
<dbReference type="eggNOG" id="COG1102">
    <property type="taxonomic scope" value="Bacteria"/>
</dbReference>
<dbReference type="eggNOG" id="COG1904">
    <property type="taxonomic scope" value="Bacteria"/>
</dbReference>
<dbReference type="HOGENOM" id="CLU_518480_0_0_11"/>
<dbReference type="OrthoDB" id="9766564at2"/>
<dbReference type="BioCyc" id="CORYNE:G18NG-12087-MONOMER"/>
<dbReference type="UniPathway" id="UPA00246"/>
<dbReference type="Proteomes" id="UP000000582">
    <property type="component" value="Chromosome"/>
</dbReference>
<dbReference type="Proteomes" id="UP000001009">
    <property type="component" value="Chromosome"/>
</dbReference>
<dbReference type="GO" id="GO:0008880">
    <property type="term" value="F:glucuronate isomerase activity"/>
    <property type="evidence" value="ECO:0007669"/>
    <property type="project" value="UniProtKB-EC"/>
</dbReference>
<dbReference type="GO" id="GO:0019698">
    <property type="term" value="P:D-galacturonate catabolic process"/>
    <property type="evidence" value="ECO:0007669"/>
    <property type="project" value="TreeGrafter"/>
</dbReference>
<dbReference type="GO" id="GO:0042840">
    <property type="term" value="P:D-glucuronate catabolic process"/>
    <property type="evidence" value="ECO:0007669"/>
    <property type="project" value="TreeGrafter"/>
</dbReference>
<dbReference type="Gene3D" id="3.20.20.140">
    <property type="entry name" value="Metal-dependent hydrolases"/>
    <property type="match status" value="2"/>
</dbReference>
<dbReference type="Gene3D" id="3.40.50.300">
    <property type="entry name" value="P-loop containing nucleotide triphosphate hydrolases"/>
    <property type="match status" value="1"/>
</dbReference>
<dbReference type="InterPro" id="IPR032466">
    <property type="entry name" value="Metal_Hydrolase"/>
</dbReference>
<dbReference type="InterPro" id="IPR027417">
    <property type="entry name" value="P-loop_NTPase"/>
</dbReference>
<dbReference type="InterPro" id="IPR003766">
    <property type="entry name" value="Uronate_isomerase"/>
</dbReference>
<dbReference type="NCBIfam" id="NF002794">
    <property type="entry name" value="PRK02925.1"/>
    <property type="match status" value="1"/>
</dbReference>
<dbReference type="PANTHER" id="PTHR30068">
    <property type="entry name" value="URONATE ISOMERASE"/>
    <property type="match status" value="1"/>
</dbReference>
<dbReference type="PANTHER" id="PTHR30068:SF4">
    <property type="entry name" value="URONATE ISOMERASE"/>
    <property type="match status" value="1"/>
</dbReference>
<dbReference type="Pfam" id="PF13189">
    <property type="entry name" value="Cytidylate_kin2"/>
    <property type="match status" value="1"/>
</dbReference>
<dbReference type="Pfam" id="PF02614">
    <property type="entry name" value="UxaC"/>
    <property type="match status" value="1"/>
</dbReference>
<dbReference type="SUPFAM" id="SSF51556">
    <property type="entry name" value="Metallo-dependent hydrolases"/>
    <property type="match status" value="1"/>
</dbReference>
<protein>
    <recommendedName>
        <fullName>Uronate isomerase</fullName>
        <ecNumber>5.3.1.12</ecNumber>
    </recommendedName>
    <alternativeName>
        <fullName>Glucuronate isomerase</fullName>
    </alternativeName>
    <alternativeName>
        <fullName>Uronic isomerase</fullName>
    </alternativeName>
</protein>
<sequence>MTTSHASHPDRLLPADPGTRDIARRLLAHVEDLPIISPHGHLEASMFVKDEAFPDPTSLLISPDHYLTRMMHSAGVDLADLRVGGHEGKSAREAWRIFMSHWDLYAGTATGYWVEQEFEHVFGINAERLNVGTPEHADAIFDELTDILAKPDFRPRALAEQFNLEVLATTDDPLDDLADHKALADDPTFSPRVLPTFRPDAYTKMYNAGWAEKTTKLIDTAGDGKAGWEGYLQAMRNRRQYFINHGATSADHGLHDTDTTPLSHKDAQKILDKGLAGTATLAEMHAFEANTTYRFAEMSQEDGLVMTIHPGVYRNHSASAQKKFGADIGADIPFQMEFTNGLRPLLSDFGENKDLISDSSFNRWLRTVSLGSTQDADMAAASNLAANSKMARQNTRDILDAVSDGGVMLGRNGALVLGPVVGTLHIKFIAPLNKRVERVMYKTGLSEAAAAEQCALEDRLREEMAHALYQWNPGRDENYDLVINTGSMTYEQIVDLVVETYARKYPLHVRIIPNGKDQ</sequence>
<comment type="catalytic activity">
    <reaction>
        <text>D-glucuronate = D-fructuronate</text>
        <dbReference type="Rhea" id="RHEA:13049"/>
        <dbReference type="ChEBI" id="CHEBI:58720"/>
        <dbReference type="ChEBI" id="CHEBI:59863"/>
        <dbReference type="EC" id="5.3.1.12"/>
    </reaction>
</comment>
<comment type="catalytic activity">
    <reaction>
        <text>aldehydo-D-galacturonate = keto-D-tagaturonate</text>
        <dbReference type="Rhea" id="RHEA:27702"/>
        <dbReference type="ChEBI" id="CHEBI:12952"/>
        <dbReference type="ChEBI" id="CHEBI:17886"/>
        <dbReference type="EC" id="5.3.1.12"/>
    </reaction>
</comment>
<comment type="pathway">
    <text>Carbohydrate metabolism; pentose and glucuronate interconversion.</text>
</comment>
<comment type="similarity">
    <text evidence="1">Belongs to the metallo-dependent hydrolases superfamily. Uronate isomerase family.</text>
</comment>
<comment type="caution">
    <text evidence="1">This sequence seems to be incorrect, it diverges from other UxaC orthologs in position 354.</text>
</comment>
<gene>
    <name type="primary">uxaC</name>
    <name type="ordered locus">Cgl2484</name>
    <name type="ordered locus">cg2731</name>
</gene>
<organism>
    <name type="scientific">Corynebacterium glutamicum (strain ATCC 13032 / DSM 20300 / JCM 1318 / BCRC 11384 / CCUG 27702 / LMG 3730 / NBRC 12168 / NCIMB 10025 / NRRL B-2784 / 534)</name>
    <dbReference type="NCBI Taxonomy" id="196627"/>
    <lineage>
        <taxon>Bacteria</taxon>
        <taxon>Bacillati</taxon>
        <taxon>Actinomycetota</taxon>
        <taxon>Actinomycetes</taxon>
        <taxon>Mycobacteriales</taxon>
        <taxon>Corynebacteriaceae</taxon>
        <taxon>Corynebacterium</taxon>
    </lineage>
</organism>
<proteinExistence type="inferred from homology"/>
<reference key="1">
    <citation type="journal article" date="2003" name="Appl. Microbiol. Biotechnol.">
        <title>The Corynebacterium glutamicum genome: features and impacts on biotechnological processes.</title>
        <authorList>
            <person name="Ikeda M."/>
            <person name="Nakagawa S."/>
        </authorList>
    </citation>
    <scope>NUCLEOTIDE SEQUENCE [LARGE SCALE GENOMIC DNA]</scope>
    <source>
        <strain>ATCC 13032 / DSM 20300 / JCM 1318 / BCRC 11384 / CCUG 27702 / LMG 3730 / NBRC 12168 / NCIMB 10025 / NRRL B-2784 / 534</strain>
    </source>
</reference>
<reference key="2">
    <citation type="journal article" date="2003" name="J. Biotechnol.">
        <title>The complete Corynebacterium glutamicum ATCC 13032 genome sequence and its impact on the production of L-aspartate-derived amino acids and vitamins.</title>
        <authorList>
            <person name="Kalinowski J."/>
            <person name="Bathe B."/>
            <person name="Bartels D."/>
            <person name="Bischoff N."/>
            <person name="Bott M."/>
            <person name="Burkovski A."/>
            <person name="Dusch N."/>
            <person name="Eggeling L."/>
            <person name="Eikmanns B.J."/>
            <person name="Gaigalat L."/>
            <person name="Goesmann A."/>
            <person name="Hartmann M."/>
            <person name="Huthmacher K."/>
            <person name="Kraemer R."/>
            <person name="Linke B."/>
            <person name="McHardy A.C."/>
            <person name="Meyer F."/>
            <person name="Moeckel B."/>
            <person name="Pfefferle W."/>
            <person name="Puehler A."/>
            <person name="Rey D.A."/>
            <person name="Rueckert C."/>
            <person name="Rupp O."/>
            <person name="Sahm H."/>
            <person name="Wendisch V.F."/>
            <person name="Wiegraebe I."/>
            <person name="Tauch A."/>
        </authorList>
    </citation>
    <scope>NUCLEOTIDE SEQUENCE [LARGE SCALE GENOMIC DNA]</scope>
    <source>
        <strain>ATCC 13032 / DSM 20300 / JCM 1318 / BCRC 11384 / CCUG 27702 / LMG 3730 / NBRC 12168 / NCIMB 10025 / NRRL B-2784 / 534</strain>
    </source>
</reference>
<feature type="chain" id="PRO_0000172770" description="Uronate isomerase">
    <location>
        <begin position="1"/>
        <end position="518"/>
    </location>
</feature>
<accession>Q8NMT1</accession>
<evidence type="ECO:0000305" key="1"/>